<proteinExistence type="evidence at transcript level"/>
<evidence type="ECO:0000250" key="1">
    <source>
        <dbReference type="UniProtKB" id="Q29016"/>
    </source>
</evidence>
<evidence type="ECO:0000250" key="2">
    <source>
        <dbReference type="UniProtKB" id="Q3V140"/>
    </source>
</evidence>
<evidence type="ECO:0000255" key="3"/>
<evidence type="ECO:0000256" key="4">
    <source>
        <dbReference type="SAM" id="MobiDB-lite"/>
    </source>
</evidence>
<evidence type="ECO:0000269" key="5">
    <source>
    </source>
</evidence>
<evidence type="ECO:0000303" key="6">
    <source>
    </source>
</evidence>
<evidence type="ECO:0000305" key="7"/>
<evidence type="ECO:0000312" key="8">
    <source>
        <dbReference type="EMBL" id="BAA03740.1"/>
    </source>
</evidence>
<dbReference type="EMBL" id="D16203">
    <property type="protein sequence ID" value="BAA03740.1"/>
    <property type="molecule type" value="mRNA"/>
</dbReference>
<dbReference type="PIR" id="B54424">
    <property type="entry name" value="B54424"/>
</dbReference>
<dbReference type="RefSeq" id="NP_001166378.1">
    <property type="nucleotide sequence ID" value="NM_001172907.1"/>
</dbReference>
<dbReference type="FunCoup" id="Q60485">
    <property type="interactions" value="50"/>
</dbReference>
<dbReference type="STRING" id="10141.ENSCPOP00000011063"/>
<dbReference type="GeneID" id="100135468"/>
<dbReference type="KEGG" id="cpoc:100135468"/>
<dbReference type="CTD" id="84519"/>
<dbReference type="eggNOG" id="ENOG502R6TS">
    <property type="taxonomic scope" value="Eukaryota"/>
</dbReference>
<dbReference type="InParanoid" id="Q60485"/>
<dbReference type="OrthoDB" id="9009946at2759"/>
<dbReference type="Proteomes" id="UP000005447">
    <property type="component" value="Unassembled WGS sequence"/>
</dbReference>
<dbReference type="GO" id="GO:0002080">
    <property type="term" value="C:acrosomal membrane"/>
    <property type="evidence" value="ECO:0000250"/>
    <property type="project" value="UniProtKB"/>
</dbReference>
<dbReference type="GO" id="GO:0001669">
    <property type="term" value="C:acrosomal vesicle"/>
    <property type="evidence" value="ECO:0000250"/>
    <property type="project" value="UniProtKB"/>
</dbReference>
<dbReference type="GO" id="GO:0005576">
    <property type="term" value="C:extracellular region"/>
    <property type="evidence" value="ECO:0000250"/>
    <property type="project" value="UniProtKB"/>
</dbReference>
<dbReference type="GO" id="GO:0005634">
    <property type="term" value="C:nucleus"/>
    <property type="evidence" value="ECO:0007669"/>
    <property type="project" value="TreeGrafter"/>
</dbReference>
<dbReference type="GO" id="GO:0001675">
    <property type="term" value="P:acrosome assembly"/>
    <property type="evidence" value="ECO:0000250"/>
    <property type="project" value="UniProtKB"/>
</dbReference>
<dbReference type="GO" id="GO:0009566">
    <property type="term" value="P:fertilization"/>
    <property type="evidence" value="ECO:0000250"/>
    <property type="project" value="UniProtKB"/>
</dbReference>
<dbReference type="GO" id="GO:0007286">
    <property type="term" value="P:spermatid development"/>
    <property type="evidence" value="ECO:0000250"/>
    <property type="project" value="UniProtKB"/>
</dbReference>
<dbReference type="InterPro" id="IPR036058">
    <property type="entry name" value="Kazal_dom_sf"/>
</dbReference>
<dbReference type="InterPro" id="IPR009865">
    <property type="entry name" value="Proacrosin-bd"/>
</dbReference>
<dbReference type="PANTHER" id="PTHR21362">
    <property type="entry name" value="ACROSIN-BINDING PROTEIN"/>
    <property type="match status" value="1"/>
</dbReference>
<dbReference type="PANTHER" id="PTHR21362:SF1">
    <property type="entry name" value="ACROSIN-BINDING PROTEIN"/>
    <property type="match status" value="1"/>
</dbReference>
<dbReference type="Pfam" id="PF07222">
    <property type="entry name" value="PBP_sp32"/>
    <property type="match status" value="1"/>
</dbReference>
<dbReference type="SUPFAM" id="SSF100895">
    <property type="entry name" value="Kazal-type serine protease inhibitors"/>
    <property type="match status" value="1"/>
</dbReference>
<name>ACRBP_CAVPO</name>
<feature type="signal peptide" evidence="3">
    <location>
        <begin position="1"/>
        <end position="25"/>
    </location>
</feature>
<feature type="chain" id="PRO_0000227515" description="Acrosin-binding protein">
    <location>
        <begin position="26"/>
        <end position="543"/>
    </location>
</feature>
<feature type="propeptide" id="PRO_0000449365" description="Removed in mature form" evidence="1">
    <location>
        <begin position="26"/>
        <end position="276"/>
    </location>
</feature>
<feature type="chain" id="PRO_0000449366" description="Acrosin-binding protein, mature form" evidence="1">
    <location>
        <begin position="277"/>
        <end position="543"/>
    </location>
</feature>
<feature type="region of interest" description="Pro-ACR binding" evidence="2">
    <location>
        <begin position="26"/>
        <end position="106"/>
    </location>
</feature>
<feature type="region of interest" description="Disordered" evidence="4">
    <location>
        <begin position="187"/>
        <end position="239"/>
    </location>
</feature>
<feature type="region of interest" description="Pro-ACR binding" evidence="2">
    <location>
        <begin position="319"/>
        <end position="427"/>
    </location>
</feature>
<feature type="compositionally biased region" description="Basic and acidic residues" evidence="4">
    <location>
        <begin position="193"/>
        <end position="216"/>
    </location>
</feature>
<feature type="compositionally biased region" description="Acidic residues" evidence="4">
    <location>
        <begin position="217"/>
        <end position="232"/>
    </location>
</feature>
<protein>
    <recommendedName>
        <fullName>Acrosin-binding protein</fullName>
    </recommendedName>
    <alternativeName>
        <fullName>Acrosin-binding protein, 60 kDa form</fullName>
    </alternativeName>
    <alternativeName>
        <fullName>Proacrosin-binding protein sp32</fullName>
    </alternativeName>
    <component>
        <recommendedName>
            <fullName>Acrosin-binding protein, mature form</fullName>
        </recommendedName>
        <alternativeName>
            <fullName>Acrosin-binding protein, 32 kDa form, mature form</fullName>
        </alternativeName>
        <alternativeName>
            <fullName evidence="6">Sp32</fullName>
        </alternativeName>
    </component>
</protein>
<accession>Q60485</accession>
<reference evidence="7 8" key="1">
    <citation type="journal article" date="1994" name="J. Biol. Chem.">
        <title>An acrosomal protein, sp32, mammalian sperm is a binding protein specific for two proacrosins and an acrosin intermediate.</title>
        <authorList>
            <person name="Baba T."/>
            <person name="Niida Y."/>
            <person name="Michikawa Y."/>
            <person name="Kashiwabara S."/>
            <person name="Kodaira K."/>
            <person name="Takenaka M."/>
            <person name="Kohno N."/>
            <person name="Gerton G.L."/>
            <person name="Arai Y."/>
        </authorList>
    </citation>
    <scope>NUCLEOTIDE SEQUENCE [MRNA]</scope>
    <scope>TISSUE SPECIFICITY</scope>
    <source>
        <tissue evidence="8">Testis</tissue>
    </source>
</reference>
<comment type="function">
    <molecule>Acrosin-binding protein, mature form</molecule>
    <text evidence="2">Acrosomal protein that maintains proacrosin (pro-ACR) as an enzymatically inactive zymogen in the acrosome. Involved also in the acrosome formation.</text>
</comment>
<comment type="subunit">
    <molecule>Acrosin-binding protein, mature form</molecule>
    <text evidence="1">Binds proacrosin (ACR). Does not bind the mature form of ACR.</text>
</comment>
<comment type="subcellular location">
    <subcellularLocation>
        <location evidence="1">Secreted</location>
    </subcellularLocation>
    <subcellularLocation>
        <location evidence="1 2">Cytoplasmic vesicle</location>
        <location evidence="1 2">Secretory vesicle</location>
        <location evidence="1 2">Acrosome</location>
    </subcellularLocation>
</comment>
<comment type="tissue specificity">
    <text evidence="5">Specifically expressed in testis.</text>
</comment>
<comment type="PTM">
    <text evidence="1">The N-terminus is blocked.</text>
</comment>
<comment type="PTM">
    <text evidence="1">Phosphorylated on Tyr residues in capacitated sperm.</text>
</comment>
<comment type="PTM">
    <text evidence="1">Synthesized as a 60-kDa precursor, the 32-kDa mature form is post-translationally produced by the removal of the N-terminal half of the precursor during sperm maturation in the testis and/or epididymis.</text>
</comment>
<gene>
    <name type="primary">ACRBP</name>
</gene>
<keyword id="KW-0968">Cytoplasmic vesicle</keyword>
<keyword id="KW-0597">Phosphoprotein</keyword>
<keyword id="KW-1185">Reference proteome</keyword>
<keyword id="KW-0964">Secreted</keyword>
<keyword id="KW-0732">Signal</keyword>
<sequence length="543" mass="61202">MGQPAAGSILTLLRVLLLPLGPALAQDSPSAPTPGSPLSPTEYERFFALLTPTWKAETTCRLRATHGCRNPTIVQLDQYENHGLVPDGAVCSDLPYASWFESFCQFSQYRCSNHVYYAKRVRCSQPVSILSVNSFKELESPVEVSPTTMTSPVTSHIKATERQSFQAWPERLSNNVEELLQSSLSLAGQEQAAGHKQEQGQEQHKQDPTQEHKQDDGQEQEEQEEEQEEEGKQEEGQSVEDMLGRVGRAGLRIGSEPKPQSLSLSSDPHSFTARVRDVDSAPMMIENIQELIQSAQEMEEMYEEDAYWRSQNHGSLLQLPHKEALLVLCYSIVMNSCVMTPSAKAWKYLEEETFGFGKSVCDNLGRRHMALCPLCAFCSLKLEQCHSEANLQRQQCDASHKTPFISSLLTAQTMSMGTQAGTSESGRFYGLDVYGGLRMDFWCARLATKGCEDIRVSSWLQTEFLSFHNGDFPTKVCDTDYIQYPNYCSFKSQQCLMKNRNRKVSRMRCMQNETYNVLTPSKGEDLVLRWSQEFSTLALSRFG</sequence>
<organism>
    <name type="scientific">Cavia porcellus</name>
    <name type="common">Guinea pig</name>
    <dbReference type="NCBI Taxonomy" id="10141"/>
    <lineage>
        <taxon>Eukaryota</taxon>
        <taxon>Metazoa</taxon>
        <taxon>Chordata</taxon>
        <taxon>Craniata</taxon>
        <taxon>Vertebrata</taxon>
        <taxon>Euteleostomi</taxon>
        <taxon>Mammalia</taxon>
        <taxon>Eutheria</taxon>
        <taxon>Euarchontoglires</taxon>
        <taxon>Glires</taxon>
        <taxon>Rodentia</taxon>
        <taxon>Hystricomorpha</taxon>
        <taxon>Caviidae</taxon>
        <taxon>Cavia</taxon>
    </lineage>
</organism>